<feature type="chain" id="PRO_1000069301" description="UPF0502 protein Pput_3252">
    <location>
        <begin position="1"/>
        <end position="214"/>
    </location>
</feature>
<proteinExistence type="inferred from homology"/>
<comment type="similarity">
    <text evidence="1">Belongs to the UPF0502 family.</text>
</comment>
<reference key="1">
    <citation type="submission" date="2007-05" db="EMBL/GenBank/DDBJ databases">
        <title>Complete sequence of Pseudomonas putida F1.</title>
        <authorList>
            <consortium name="US DOE Joint Genome Institute"/>
            <person name="Copeland A."/>
            <person name="Lucas S."/>
            <person name="Lapidus A."/>
            <person name="Barry K."/>
            <person name="Detter J.C."/>
            <person name="Glavina del Rio T."/>
            <person name="Hammon N."/>
            <person name="Israni S."/>
            <person name="Dalin E."/>
            <person name="Tice H."/>
            <person name="Pitluck S."/>
            <person name="Chain P."/>
            <person name="Malfatti S."/>
            <person name="Shin M."/>
            <person name="Vergez L."/>
            <person name="Schmutz J."/>
            <person name="Larimer F."/>
            <person name="Land M."/>
            <person name="Hauser L."/>
            <person name="Kyrpides N."/>
            <person name="Lykidis A."/>
            <person name="Parales R."/>
            <person name="Richardson P."/>
        </authorList>
    </citation>
    <scope>NUCLEOTIDE SEQUENCE [LARGE SCALE GENOMIC DNA]</scope>
    <source>
        <strain>ATCC 700007 / DSM 6899 / JCM 31910 / BCRC 17059 / LMG 24140 / F1</strain>
    </source>
</reference>
<dbReference type="EMBL" id="CP000712">
    <property type="protein sequence ID" value="ABQ79378.1"/>
    <property type="molecule type" value="Genomic_DNA"/>
</dbReference>
<dbReference type="SMR" id="A5W5G8"/>
<dbReference type="KEGG" id="ppf:Pput_3252"/>
<dbReference type="eggNOG" id="COG3132">
    <property type="taxonomic scope" value="Bacteria"/>
</dbReference>
<dbReference type="HOGENOM" id="CLU_057831_1_0_6"/>
<dbReference type="Gene3D" id="1.10.10.10">
    <property type="entry name" value="Winged helix-like DNA-binding domain superfamily/Winged helix DNA-binding domain"/>
    <property type="match status" value="2"/>
</dbReference>
<dbReference type="HAMAP" id="MF_01584">
    <property type="entry name" value="UPF0502"/>
    <property type="match status" value="1"/>
</dbReference>
<dbReference type="InterPro" id="IPR007432">
    <property type="entry name" value="DUF480"/>
</dbReference>
<dbReference type="InterPro" id="IPR036388">
    <property type="entry name" value="WH-like_DNA-bd_sf"/>
</dbReference>
<dbReference type="InterPro" id="IPR036390">
    <property type="entry name" value="WH_DNA-bd_sf"/>
</dbReference>
<dbReference type="PANTHER" id="PTHR38768">
    <property type="entry name" value="UPF0502 PROTEIN YCEH"/>
    <property type="match status" value="1"/>
</dbReference>
<dbReference type="PANTHER" id="PTHR38768:SF1">
    <property type="entry name" value="UPF0502 PROTEIN YCEH"/>
    <property type="match status" value="1"/>
</dbReference>
<dbReference type="Pfam" id="PF04337">
    <property type="entry name" value="DUF480"/>
    <property type="match status" value="1"/>
</dbReference>
<dbReference type="SUPFAM" id="SSF46785">
    <property type="entry name" value="Winged helix' DNA-binding domain"/>
    <property type="match status" value="2"/>
</dbReference>
<accession>A5W5G8</accession>
<gene>
    <name type="ordered locus">Pput_3252</name>
</gene>
<name>Y3252_PSEP1</name>
<evidence type="ECO:0000255" key="1">
    <source>
        <dbReference type="HAMAP-Rule" id="MF_01584"/>
    </source>
</evidence>
<protein>
    <recommendedName>
        <fullName evidence="1">UPF0502 protein Pput_3252</fullName>
    </recommendedName>
</protein>
<sequence>MSEHETAGEGRFNSIEVRVLGSLIEKQATSPESYPLTLNALVLACNQKTSREPVMNLTQGQVGQALRVLEGQGMTRLQMGSRADRWEHRVDKALELVPAQLVLMGLMFLRGPQTLNELLTRSNRLHDFDDTEQIQHQLERLISRGLALHLPRQAGQREDRYTHALGDPAEIEAILAARQQEGGGRSGGSVSEERIEALEARIAALEARLAELEG</sequence>
<organism>
    <name type="scientific">Pseudomonas putida (strain ATCC 700007 / DSM 6899 / JCM 31910 / BCRC 17059 / LMG 24140 / F1)</name>
    <dbReference type="NCBI Taxonomy" id="351746"/>
    <lineage>
        <taxon>Bacteria</taxon>
        <taxon>Pseudomonadati</taxon>
        <taxon>Pseudomonadota</taxon>
        <taxon>Gammaproteobacteria</taxon>
        <taxon>Pseudomonadales</taxon>
        <taxon>Pseudomonadaceae</taxon>
        <taxon>Pseudomonas</taxon>
    </lineage>
</organism>